<protein>
    <recommendedName>
        <fullName evidence="1">Phosphoribosylaminoimidazole-succinocarboxamide synthase</fullName>
        <ecNumber evidence="1">6.3.2.6</ecNumber>
    </recommendedName>
    <alternativeName>
        <fullName evidence="1">SAICAR synthetase</fullName>
    </alternativeName>
</protein>
<sequence length="235" mass="27044">MVNQLEMLYEGKAKKIYATDKEDMVIVHYKDDATAFNGEKKAQIESKGVLNNEITSLIFEMLNKEGIKTHFVEKLNDRDQLCKKVEIVPLEVIVRNVAAGSMAKRLGLEEGYELKTTVFELSYKDDSLGDPLINDYHAVGIGATTFEELNKIYEITAKVNEILKEAFKKQNINLIDFKLEFGRYKGEILLADEISPDTCRFWDAKTGEKMDKDRFRRDMGNVINGYREVLNRLRN</sequence>
<proteinExistence type="inferred from homology"/>
<dbReference type="EC" id="6.3.2.6" evidence="1"/>
<dbReference type="EMBL" id="CP000312">
    <property type="protein sequence ID" value="ABG86858.1"/>
    <property type="molecule type" value="Genomic_DNA"/>
</dbReference>
<dbReference type="RefSeq" id="WP_011591750.1">
    <property type="nucleotide sequence ID" value="NC_008262.1"/>
</dbReference>
<dbReference type="SMR" id="Q0SV52"/>
<dbReference type="KEGG" id="cpr:CPR_0671"/>
<dbReference type="UniPathway" id="UPA00074">
    <property type="reaction ID" value="UER00131"/>
</dbReference>
<dbReference type="Proteomes" id="UP000001824">
    <property type="component" value="Chromosome"/>
</dbReference>
<dbReference type="GO" id="GO:0005524">
    <property type="term" value="F:ATP binding"/>
    <property type="evidence" value="ECO:0007669"/>
    <property type="project" value="UniProtKB-KW"/>
</dbReference>
<dbReference type="GO" id="GO:0004639">
    <property type="term" value="F:phosphoribosylaminoimidazolesuccinocarboxamide synthase activity"/>
    <property type="evidence" value="ECO:0007669"/>
    <property type="project" value="UniProtKB-UniRule"/>
</dbReference>
<dbReference type="GO" id="GO:0006189">
    <property type="term" value="P:'de novo' IMP biosynthetic process"/>
    <property type="evidence" value="ECO:0007669"/>
    <property type="project" value="UniProtKB-UniRule"/>
</dbReference>
<dbReference type="GO" id="GO:0009236">
    <property type="term" value="P:cobalamin biosynthetic process"/>
    <property type="evidence" value="ECO:0007669"/>
    <property type="project" value="InterPro"/>
</dbReference>
<dbReference type="CDD" id="cd01415">
    <property type="entry name" value="SAICAR_synt_PurC"/>
    <property type="match status" value="1"/>
</dbReference>
<dbReference type="FunFam" id="3.30.200.20:FF:000189">
    <property type="entry name" value="Phosphoribosylaminoimidazole-succinocarboxamide synthase"/>
    <property type="match status" value="1"/>
</dbReference>
<dbReference type="FunFam" id="3.30.470.20:FF:000006">
    <property type="entry name" value="Phosphoribosylaminoimidazole-succinocarboxamide synthase"/>
    <property type="match status" value="1"/>
</dbReference>
<dbReference type="Gene3D" id="3.30.470.20">
    <property type="entry name" value="ATP-grasp fold, B domain"/>
    <property type="match status" value="1"/>
</dbReference>
<dbReference type="Gene3D" id="3.30.200.20">
    <property type="entry name" value="Phosphorylase Kinase, domain 1"/>
    <property type="match status" value="1"/>
</dbReference>
<dbReference type="HAMAP" id="MF_00137">
    <property type="entry name" value="SAICAR_synth"/>
    <property type="match status" value="1"/>
</dbReference>
<dbReference type="InterPro" id="IPR028923">
    <property type="entry name" value="SAICAR_synt/ADE2_N"/>
</dbReference>
<dbReference type="InterPro" id="IPR033934">
    <property type="entry name" value="SAICAR_synt_PurC"/>
</dbReference>
<dbReference type="InterPro" id="IPR001636">
    <property type="entry name" value="SAICAR_synth"/>
</dbReference>
<dbReference type="InterPro" id="IPR050089">
    <property type="entry name" value="SAICAR_synthetase"/>
</dbReference>
<dbReference type="InterPro" id="IPR018236">
    <property type="entry name" value="SAICAR_synthetase_CS"/>
</dbReference>
<dbReference type="NCBIfam" id="TIGR00081">
    <property type="entry name" value="purC"/>
    <property type="match status" value="1"/>
</dbReference>
<dbReference type="PANTHER" id="PTHR43599">
    <property type="entry name" value="MULTIFUNCTIONAL PROTEIN ADE2"/>
    <property type="match status" value="1"/>
</dbReference>
<dbReference type="PANTHER" id="PTHR43599:SF3">
    <property type="entry name" value="SI:DKEY-6E2.2"/>
    <property type="match status" value="1"/>
</dbReference>
<dbReference type="Pfam" id="PF01259">
    <property type="entry name" value="SAICAR_synt"/>
    <property type="match status" value="1"/>
</dbReference>
<dbReference type="SUPFAM" id="SSF56104">
    <property type="entry name" value="SAICAR synthase-like"/>
    <property type="match status" value="1"/>
</dbReference>
<dbReference type="PROSITE" id="PS01057">
    <property type="entry name" value="SAICAR_SYNTHETASE_1"/>
    <property type="match status" value="1"/>
</dbReference>
<dbReference type="PROSITE" id="PS01058">
    <property type="entry name" value="SAICAR_SYNTHETASE_2"/>
    <property type="match status" value="1"/>
</dbReference>
<reference key="1">
    <citation type="journal article" date="2006" name="Genome Res.">
        <title>Skewed genomic variability in strains of the toxigenic bacterial pathogen, Clostridium perfringens.</title>
        <authorList>
            <person name="Myers G.S.A."/>
            <person name="Rasko D.A."/>
            <person name="Cheung J.K."/>
            <person name="Ravel J."/>
            <person name="Seshadri R."/>
            <person name="DeBoy R.T."/>
            <person name="Ren Q."/>
            <person name="Varga J."/>
            <person name="Awad M.M."/>
            <person name="Brinkac L.M."/>
            <person name="Daugherty S.C."/>
            <person name="Haft D.H."/>
            <person name="Dodson R.J."/>
            <person name="Madupu R."/>
            <person name="Nelson W.C."/>
            <person name="Rosovitz M.J."/>
            <person name="Sullivan S.A."/>
            <person name="Khouri H."/>
            <person name="Dimitrov G.I."/>
            <person name="Watkins K.L."/>
            <person name="Mulligan S."/>
            <person name="Benton J."/>
            <person name="Radune D."/>
            <person name="Fisher D.J."/>
            <person name="Atkins H.S."/>
            <person name="Hiscox T."/>
            <person name="Jost B.H."/>
            <person name="Billington S.J."/>
            <person name="Songer J.G."/>
            <person name="McClane B.A."/>
            <person name="Titball R.W."/>
            <person name="Rood J.I."/>
            <person name="Melville S.B."/>
            <person name="Paulsen I.T."/>
        </authorList>
    </citation>
    <scope>NUCLEOTIDE SEQUENCE [LARGE SCALE GENOMIC DNA]</scope>
    <source>
        <strain>SM101 / Type A</strain>
    </source>
</reference>
<organism>
    <name type="scientific">Clostridium perfringens (strain SM101 / Type A)</name>
    <dbReference type="NCBI Taxonomy" id="289380"/>
    <lineage>
        <taxon>Bacteria</taxon>
        <taxon>Bacillati</taxon>
        <taxon>Bacillota</taxon>
        <taxon>Clostridia</taxon>
        <taxon>Eubacteriales</taxon>
        <taxon>Clostridiaceae</taxon>
        <taxon>Clostridium</taxon>
    </lineage>
</organism>
<accession>Q0SV52</accession>
<gene>
    <name evidence="1" type="primary">purC</name>
    <name type="ordered locus">CPR_0671</name>
</gene>
<feature type="chain" id="PRO_1000018693" description="Phosphoribosylaminoimidazole-succinocarboxamide synthase">
    <location>
        <begin position="1"/>
        <end position="235"/>
    </location>
</feature>
<keyword id="KW-0067">ATP-binding</keyword>
<keyword id="KW-0436">Ligase</keyword>
<keyword id="KW-0547">Nucleotide-binding</keyword>
<keyword id="KW-0658">Purine biosynthesis</keyword>
<comment type="catalytic activity">
    <reaction evidence="1">
        <text>5-amino-1-(5-phospho-D-ribosyl)imidazole-4-carboxylate + L-aspartate + ATP = (2S)-2-[5-amino-1-(5-phospho-beta-D-ribosyl)imidazole-4-carboxamido]succinate + ADP + phosphate + 2 H(+)</text>
        <dbReference type="Rhea" id="RHEA:22628"/>
        <dbReference type="ChEBI" id="CHEBI:15378"/>
        <dbReference type="ChEBI" id="CHEBI:29991"/>
        <dbReference type="ChEBI" id="CHEBI:30616"/>
        <dbReference type="ChEBI" id="CHEBI:43474"/>
        <dbReference type="ChEBI" id="CHEBI:58443"/>
        <dbReference type="ChEBI" id="CHEBI:77657"/>
        <dbReference type="ChEBI" id="CHEBI:456216"/>
        <dbReference type="EC" id="6.3.2.6"/>
    </reaction>
</comment>
<comment type="pathway">
    <text evidence="1">Purine metabolism; IMP biosynthesis via de novo pathway; 5-amino-1-(5-phospho-D-ribosyl)imidazole-4-carboxamide from 5-amino-1-(5-phospho-D-ribosyl)imidazole-4-carboxylate: step 1/2.</text>
</comment>
<comment type="similarity">
    <text evidence="1">Belongs to the SAICAR synthetase family.</text>
</comment>
<name>PUR7_CLOPS</name>
<evidence type="ECO:0000255" key="1">
    <source>
        <dbReference type="HAMAP-Rule" id="MF_00137"/>
    </source>
</evidence>